<evidence type="ECO:0000255" key="1">
    <source>
        <dbReference type="HAMAP-Rule" id="MF_00294"/>
    </source>
</evidence>
<evidence type="ECO:0000305" key="2"/>
<keyword id="KW-1185">Reference proteome</keyword>
<keyword id="KW-0687">Ribonucleoprotein</keyword>
<keyword id="KW-0689">Ribosomal protein</keyword>
<gene>
    <name evidence="1" type="primary">rpmG</name>
    <name type="ordered locus">SGO_2066</name>
</gene>
<proteinExistence type="inferred from homology"/>
<accession>A8AZV4</accession>
<comment type="similarity">
    <text evidence="1">Belongs to the bacterial ribosomal protein bL33 family.</text>
</comment>
<reference key="1">
    <citation type="journal article" date="2007" name="J. Bacteriol.">
        <title>Genome-wide transcriptional changes in Streptococcus gordonii in response to competence signaling peptide.</title>
        <authorList>
            <person name="Vickerman M.M."/>
            <person name="Iobst S."/>
            <person name="Jesionowski A.M."/>
            <person name="Gill S.R."/>
        </authorList>
    </citation>
    <scope>NUCLEOTIDE SEQUENCE [LARGE SCALE GENOMIC DNA]</scope>
    <source>
        <strain>Challis / ATCC 35105 / BCRC 15272 / CH1 / DL1 / V288</strain>
    </source>
</reference>
<protein>
    <recommendedName>
        <fullName evidence="1">Large ribosomal subunit protein bL33</fullName>
    </recommendedName>
    <alternativeName>
        <fullName evidence="2">50S ribosomal protein L33</fullName>
    </alternativeName>
</protein>
<organism>
    <name type="scientific">Streptococcus gordonii (strain Challis / ATCC 35105 / BCRC 15272 / CH1 / DL1 / V288)</name>
    <dbReference type="NCBI Taxonomy" id="467705"/>
    <lineage>
        <taxon>Bacteria</taxon>
        <taxon>Bacillati</taxon>
        <taxon>Bacillota</taxon>
        <taxon>Bacilli</taxon>
        <taxon>Lactobacillales</taxon>
        <taxon>Streptococcaceae</taxon>
        <taxon>Streptococcus</taxon>
    </lineage>
</organism>
<dbReference type="EMBL" id="CP000725">
    <property type="protein sequence ID" value="ABV09134.1"/>
    <property type="molecule type" value="Genomic_DNA"/>
</dbReference>
<dbReference type="RefSeq" id="WP_001265622.1">
    <property type="nucleotide sequence ID" value="NC_009785.1"/>
</dbReference>
<dbReference type="SMR" id="A8AZV4"/>
<dbReference type="STRING" id="467705.SGO_2066"/>
<dbReference type="GeneID" id="98394265"/>
<dbReference type="KEGG" id="sgo:SGO_2066"/>
<dbReference type="eggNOG" id="COG0267">
    <property type="taxonomic scope" value="Bacteria"/>
</dbReference>
<dbReference type="HOGENOM" id="CLU_190949_3_2_9"/>
<dbReference type="Proteomes" id="UP000001131">
    <property type="component" value="Chromosome"/>
</dbReference>
<dbReference type="GO" id="GO:0005737">
    <property type="term" value="C:cytoplasm"/>
    <property type="evidence" value="ECO:0007669"/>
    <property type="project" value="UniProtKB-ARBA"/>
</dbReference>
<dbReference type="GO" id="GO:1990904">
    <property type="term" value="C:ribonucleoprotein complex"/>
    <property type="evidence" value="ECO:0007669"/>
    <property type="project" value="UniProtKB-KW"/>
</dbReference>
<dbReference type="GO" id="GO:0005840">
    <property type="term" value="C:ribosome"/>
    <property type="evidence" value="ECO:0007669"/>
    <property type="project" value="UniProtKB-KW"/>
</dbReference>
<dbReference type="GO" id="GO:0003735">
    <property type="term" value="F:structural constituent of ribosome"/>
    <property type="evidence" value="ECO:0007669"/>
    <property type="project" value="InterPro"/>
</dbReference>
<dbReference type="GO" id="GO:0006412">
    <property type="term" value="P:translation"/>
    <property type="evidence" value="ECO:0007669"/>
    <property type="project" value="UniProtKB-UniRule"/>
</dbReference>
<dbReference type="Gene3D" id="2.20.28.120">
    <property type="entry name" value="Ribosomal protein L33"/>
    <property type="match status" value="1"/>
</dbReference>
<dbReference type="HAMAP" id="MF_00294">
    <property type="entry name" value="Ribosomal_bL33"/>
    <property type="match status" value="1"/>
</dbReference>
<dbReference type="InterPro" id="IPR001705">
    <property type="entry name" value="Ribosomal_bL33"/>
</dbReference>
<dbReference type="InterPro" id="IPR018264">
    <property type="entry name" value="Ribosomal_bL33_CS"/>
</dbReference>
<dbReference type="InterPro" id="IPR038584">
    <property type="entry name" value="Ribosomal_bL33_sf"/>
</dbReference>
<dbReference type="InterPro" id="IPR011332">
    <property type="entry name" value="Ribosomal_zn-bd"/>
</dbReference>
<dbReference type="NCBIfam" id="NF001764">
    <property type="entry name" value="PRK00504.1"/>
    <property type="match status" value="1"/>
</dbReference>
<dbReference type="NCBIfam" id="NF001860">
    <property type="entry name" value="PRK00595.1"/>
    <property type="match status" value="1"/>
</dbReference>
<dbReference type="NCBIfam" id="TIGR01023">
    <property type="entry name" value="rpmG_bact"/>
    <property type="match status" value="1"/>
</dbReference>
<dbReference type="PANTHER" id="PTHR43168">
    <property type="entry name" value="50S RIBOSOMAL PROTEIN L33, CHLOROPLASTIC"/>
    <property type="match status" value="1"/>
</dbReference>
<dbReference type="PANTHER" id="PTHR43168:SF2">
    <property type="entry name" value="LARGE RIBOSOMAL SUBUNIT PROTEIN BL33C"/>
    <property type="match status" value="1"/>
</dbReference>
<dbReference type="Pfam" id="PF00471">
    <property type="entry name" value="Ribosomal_L33"/>
    <property type="match status" value="1"/>
</dbReference>
<dbReference type="SUPFAM" id="SSF57829">
    <property type="entry name" value="Zn-binding ribosomal proteins"/>
    <property type="match status" value="1"/>
</dbReference>
<dbReference type="PROSITE" id="PS00582">
    <property type="entry name" value="RIBOSOMAL_L33"/>
    <property type="match status" value="1"/>
</dbReference>
<name>RL33_STRGC</name>
<feature type="chain" id="PRO_0000356709" description="Large ribosomal subunit protein bL33">
    <location>
        <begin position="1"/>
        <end position="49"/>
    </location>
</feature>
<sequence length="49" mass="5911">MRVNITLEHKESGERLYLTSKNKRNTPDRLQLKKYSPKLRKHVVFTEVK</sequence>